<dbReference type="SMR" id="P85000"/>
<dbReference type="FunCoup" id="P85000">
    <property type="interactions" value="26"/>
</dbReference>
<dbReference type="STRING" id="9031.ENSGALP00000068842"/>
<dbReference type="MEROPS" id="I01.047"/>
<dbReference type="PaxDb" id="9031-ENSGALP00000018601"/>
<dbReference type="Ensembl" id="ENSGALT00000096648">
    <property type="protein sequence ID" value="ENSGALP00000065459"/>
    <property type="gene ID" value="ENSGALG00000052026"/>
</dbReference>
<dbReference type="VEuPathDB" id="HostDB:geneid_770729"/>
<dbReference type="eggNOG" id="KOG3649">
    <property type="taxonomic scope" value="Eukaryota"/>
</dbReference>
<dbReference type="HOGENOM" id="CLU_169765_6_1_1"/>
<dbReference type="InParanoid" id="P85000"/>
<dbReference type="PhylomeDB" id="P85000"/>
<dbReference type="PRO" id="PR:P85000"/>
<dbReference type="Proteomes" id="UP000000539">
    <property type="component" value="Unassembled WGS sequence"/>
</dbReference>
<dbReference type="GO" id="GO:0005615">
    <property type="term" value="C:extracellular space"/>
    <property type="evidence" value="ECO:0000314"/>
    <property type="project" value="AgBase"/>
</dbReference>
<dbReference type="GO" id="GO:0004867">
    <property type="term" value="F:serine-type endopeptidase inhibitor activity"/>
    <property type="evidence" value="ECO:0000314"/>
    <property type="project" value="AgBase"/>
</dbReference>
<dbReference type="CDD" id="cd01327">
    <property type="entry name" value="KAZAL_PSTI"/>
    <property type="match status" value="1"/>
</dbReference>
<dbReference type="FunFam" id="3.30.60.30:FF:000031">
    <property type="entry name" value="Serine protease inhibitor Kazal-type 2"/>
    <property type="match status" value="1"/>
</dbReference>
<dbReference type="Gene3D" id="3.30.60.30">
    <property type="match status" value="1"/>
</dbReference>
<dbReference type="InterPro" id="IPR002350">
    <property type="entry name" value="Kazal_dom"/>
</dbReference>
<dbReference type="InterPro" id="IPR036058">
    <property type="entry name" value="Kazal_dom_sf"/>
</dbReference>
<dbReference type="InterPro" id="IPR001239">
    <property type="entry name" value="Prot_inh_Kazal-m"/>
</dbReference>
<dbReference type="PANTHER" id="PTHR21312">
    <property type="entry name" value="SERINE PROTEASE INHIBITOR"/>
    <property type="match status" value="1"/>
</dbReference>
<dbReference type="PANTHER" id="PTHR21312:SF30">
    <property type="entry name" value="SERINE PROTEASE INHIBITOR KAZAL-TYPE 11-RELATED"/>
    <property type="match status" value="1"/>
</dbReference>
<dbReference type="Pfam" id="PF00050">
    <property type="entry name" value="Kazal_1"/>
    <property type="match status" value="1"/>
</dbReference>
<dbReference type="PRINTS" id="PR00290">
    <property type="entry name" value="KAZALINHBTR"/>
</dbReference>
<dbReference type="SMART" id="SM00280">
    <property type="entry name" value="KAZAL"/>
    <property type="match status" value="1"/>
</dbReference>
<dbReference type="SUPFAM" id="SSF100895">
    <property type="entry name" value="Kazal-type serine protease inhibitors"/>
    <property type="match status" value="1"/>
</dbReference>
<dbReference type="PROSITE" id="PS00282">
    <property type="entry name" value="KAZAL_1"/>
    <property type="match status" value="1"/>
</dbReference>
<dbReference type="PROSITE" id="PS51465">
    <property type="entry name" value="KAZAL_2"/>
    <property type="match status" value="1"/>
</dbReference>
<feature type="chain" id="PRO_0000257989" description="Trypsin inhibitor ClTI-1">
    <location>
        <begin position="1"/>
        <end position="55"/>
    </location>
</feature>
<feature type="domain" description="Kazal-like" evidence="4">
    <location>
        <begin position="1"/>
        <end position="55"/>
    </location>
</feature>
<feature type="site" description="Reactive bond" evidence="3 4">
    <location>
        <begin position="17"/>
        <end position="18"/>
    </location>
</feature>
<feature type="disulfide bond" evidence="2 4">
    <location>
        <begin position="6"/>
        <end position="37"/>
    </location>
</feature>
<feature type="disulfide bond" evidence="2 4">
    <location>
        <begin position="15"/>
        <end position="34"/>
    </location>
</feature>
<feature type="disulfide bond" evidence="2 4">
    <location>
        <begin position="23"/>
        <end position="55"/>
    </location>
</feature>
<reference evidence="6" key="1">
    <citation type="submission" date="2006-09" db="UniProtKB">
        <authorList>
            <person name="Kubiak A."/>
            <person name="Polanowski A."/>
        </authorList>
    </citation>
    <scope>PROTEIN SEQUENCE</scope>
    <scope>FUNCTION</scope>
    <scope>MASS SPECTROMETRY</scope>
    <source>
        <tissue>Liver</tissue>
    </source>
</reference>
<keyword id="KW-0903">Direct protein sequencing</keyword>
<keyword id="KW-1015">Disulfide bond</keyword>
<keyword id="KW-0646">Protease inhibitor</keyword>
<keyword id="KW-1185">Reference proteome</keyword>
<keyword id="KW-0964">Secreted</keyword>
<keyword id="KW-0722">Serine protease inhibitor</keyword>
<organism>
    <name type="scientific">Gallus gallus</name>
    <name type="common">Chicken</name>
    <dbReference type="NCBI Taxonomy" id="9031"/>
    <lineage>
        <taxon>Eukaryota</taxon>
        <taxon>Metazoa</taxon>
        <taxon>Chordata</taxon>
        <taxon>Craniata</taxon>
        <taxon>Vertebrata</taxon>
        <taxon>Euteleostomi</taxon>
        <taxon>Archelosauria</taxon>
        <taxon>Archosauria</taxon>
        <taxon>Dinosauria</taxon>
        <taxon>Saurischia</taxon>
        <taxon>Theropoda</taxon>
        <taxon>Coelurosauria</taxon>
        <taxon>Aves</taxon>
        <taxon>Neognathae</taxon>
        <taxon>Galloanserae</taxon>
        <taxon>Galliformes</taxon>
        <taxon>Phasianidae</taxon>
        <taxon>Phasianinae</taxon>
        <taxon>Gallus</taxon>
    </lineage>
</organism>
<name>ISK1L_CHICK</name>
<accession>P85000</accession>
<proteinExistence type="evidence at protein level"/>
<protein>
    <recommendedName>
        <fullName>Trypsin inhibitor ClTI-1</fullName>
    </recommendedName>
</protein>
<comment type="function">
    <text evidence="5">Inhibits trypsin and plasmin.</text>
</comment>
<comment type="subcellular location">
    <subcellularLocation>
        <location evidence="1">Secreted</location>
    </subcellularLocation>
</comment>
<comment type="mass spectrometry"/>
<sequence>SIPPACDKYSRLPGCPRDYSPVCGTDGKTYPNECVLCLSNSEENKNVQIYKSGMC</sequence>
<evidence type="ECO:0000250" key="1"/>
<evidence type="ECO:0000250" key="2">
    <source>
        <dbReference type="UniProtKB" id="P00995"/>
    </source>
</evidence>
<evidence type="ECO:0000250" key="3">
    <source>
        <dbReference type="UniProtKB" id="P20155"/>
    </source>
</evidence>
<evidence type="ECO:0000255" key="4">
    <source>
        <dbReference type="PROSITE-ProRule" id="PRU00798"/>
    </source>
</evidence>
<evidence type="ECO:0000269" key="5">
    <source ref="1"/>
</evidence>
<evidence type="ECO:0000305" key="6"/>